<dbReference type="EC" id="3.1.1.1" evidence="1"/>
<dbReference type="EC" id="3.1.1.13" evidence="1"/>
<dbReference type="EMBL" id="AB010633">
    <property type="protein sequence ID" value="BAA24523.1"/>
    <property type="molecule type" value="mRNA"/>
</dbReference>
<dbReference type="RefSeq" id="NP_001270223.1">
    <property type="nucleotide sequence ID" value="NM_001283294.1"/>
</dbReference>
<dbReference type="SMR" id="O46421"/>
<dbReference type="STRING" id="9541.ENSMFAP00000017416"/>
<dbReference type="ESTHER" id="macfa-cxest">
    <property type="family name" value="Carb_B_Chordata"/>
</dbReference>
<dbReference type="MEROPS" id="S09.963"/>
<dbReference type="GlyCosmos" id="O46421">
    <property type="glycosylation" value="1 site, No reported glycans"/>
</dbReference>
<dbReference type="eggNOG" id="KOG1516">
    <property type="taxonomic scope" value="Eukaryota"/>
</dbReference>
<dbReference type="Proteomes" id="UP000233100">
    <property type="component" value="Unplaced"/>
</dbReference>
<dbReference type="GO" id="GO:0005737">
    <property type="term" value="C:cytoplasm"/>
    <property type="evidence" value="ECO:0000250"/>
    <property type="project" value="UniProtKB"/>
</dbReference>
<dbReference type="GO" id="GO:0005788">
    <property type="term" value="C:endoplasmic reticulum lumen"/>
    <property type="evidence" value="ECO:0007669"/>
    <property type="project" value="UniProtKB-SubCell"/>
</dbReference>
<dbReference type="GO" id="GO:0005811">
    <property type="term" value="C:lipid droplet"/>
    <property type="evidence" value="ECO:0000250"/>
    <property type="project" value="UniProtKB"/>
</dbReference>
<dbReference type="GO" id="GO:0106435">
    <property type="term" value="F:carboxylesterase activity"/>
    <property type="evidence" value="ECO:0007669"/>
    <property type="project" value="UniProtKB-EC"/>
</dbReference>
<dbReference type="GO" id="GO:0004771">
    <property type="term" value="F:sterol ester esterase activity"/>
    <property type="evidence" value="ECO:0000250"/>
    <property type="project" value="UniProtKB"/>
</dbReference>
<dbReference type="GO" id="GO:0008203">
    <property type="term" value="P:cholesterol metabolic process"/>
    <property type="evidence" value="ECO:0000250"/>
    <property type="project" value="UniProtKB"/>
</dbReference>
<dbReference type="GO" id="GO:0010887">
    <property type="term" value="P:negative regulation of cholesterol storage"/>
    <property type="evidence" value="ECO:0000250"/>
    <property type="project" value="UniProtKB"/>
</dbReference>
<dbReference type="GO" id="GO:0010875">
    <property type="term" value="P:positive regulation of cholesterol efflux"/>
    <property type="evidence" value="ECO:0000250"/>
    <property type="project" value="UniProtKB"/>
</dbReference>
<dbReference type="GO" id="GO:0090205">
    <property type="term" value="P:positive regulation of cholesterol metabolic process"/>
    <property type="evidence" value="ECO:0000250"/>
    <property type="project" value="UniProtKB"/>
</dbReference>
<dbReference type="GO" id="GO:0070857">
    <property type="term" value="P:regulation of bile acid biosynthetic process"/>
    <property type="evidence" value="ECO:0000250"/>
    <property type="project" value="UniProtKB"/>
</dbReference>
<dbReference type="GO" id="GO:0120188">
    <property type="term" value="P:regulation of bile acid secretion"/>
    <property type="evidence" value="ECO:0000250"/>
    <property type="project" value="UniProtKB"/>
</dbReference>
<dbReference type="GO" id="GO:0043691">
    <property type="term" value="P:reverse cholesterol transport"/>
    <property type="evidence" value="ECO:0000250"/>
    <property type="project" value="UniProtKB"/>
</dbReference>
<dbReference type="CDD" id="cd00312">
    <property type="entry name" value="Esterase_lipase"/>
    <property type="match status" value="1"/>
</dbReference>
<dbReference type="FunFam" id="3.40.50.1820:FF:000011">
    <property type="entry name" value="Carboxylic ester hydrolase"/>
    <property type="match status" value="1"/>
</dbReference>
<dbReference type="Gene3D" id="3.40.50.1820">
    <property type="entry name" value="alpha/beta hydrolase"/>
    <property type="match status" value="1"/>
</dbReference>
<dbReference type="InterPro" id="IPR029058">
    <property type="entry name" value="AB_hydrolase_fold"/>
</dbReference>
<dbReference type="InterPro" id="IPR002018">
    <property type="entry name" value="CarbesteraseB"/>
</dbReference>
<dbReference type="InterPro" id="IPR019826">
    <property type="entry name" value="Carboxylesterase_B_AS"/>
</dbReference>
<dbReference type="InterPro" id="IPR019819">
    <property type="entry name" value="Carboxylesterase_B_CS"/>
</dbReference>
<dbReference type="InterPro" id="IPR050309">
    <property type="entry name" value="Type-B_Carboxylest/Lipase"/>
</dbReference>
<dbReference type="PANTHER" id="PTHR11559">
    <property type="entry name" value="CARBOXYLESTERASE"/>
    <property type="match status" value="1"/>
</dbReference>
<dbReference type="Pfam" id="PF00135">
    <property type="entry name" value="COesterase"/>
    <property type="match status" value="1"/>
</dbReference>
<dbReference type="SUPFAM" id="SSF53474">
    <property type="entry name" value="alpha/beta-Hydrolases"/>
    <property type="match status" value="1"/>
</dbReference>
<dbReference type="PROSITE" id="PS00122">
    <property type="entry name" value="CARBOXYLESTERASE_B_1"/>
    <property type="match status" value="1"/>
</dbReference>
<dbReference type="PROSITE" id="PS00941">
    <property type="entry name" value="CARBOXYLESTERASE_B_2"/>
    <property type="match status" value="1"/>
</dbReference>
<keyword id="KW-0963">Cytoplasm</keyword>
<keyword id="KW-1015">Disulfide bond</keyword>
<keyword id="KW-0256">Endoplasmic reticulum</keyword>
<keyword id="KW-0325">Glycoprotein</keyword>
<keyword id="KW-0378">Hydrolase</keyword>
<keyword id="KW-0551">Lipid droplet</keyword>
<keyword id="KW-0443">Lipid metabolism</keyword>
<keyword id="KW-0597">Phosphoprotein</keyword>
<keyword id="KW-1185">Reference proteome</keyword>
<keyword id="KW-0719">Serine esterase</keyword>
<keyword id="KW-0732">Signal</keyword>
<sequence length="566" mass="62510">MWLRALVLATLAAFTAWGHPSSPPVVDTVHGKVLGKFVSLEGFTQPVAVFLGIPFAKPPLGPLRFTPPQPAEPWSFVKNATSYPPMCSQDAVAGQVLSELFTNRKENTPLKLSEDCLYLNIYTPADLTKKNRLPVMVWIHGGGLVVGAASTYDGLALAAHENVVVVTIQYRLGIWGFFSTGDEHSRGNWGHLDQLAALRWVQDNIASFGGNPGSVTIFGESAGGESVSVLVLSPLAKNLFHRAISESGVALTAVLVKKGDVKPLAEQIAIAAGCQTTTSAVMVHCLRQKTEEELLETTLKMKFFSLDLHGDPRESHPFLGTVIDGLLLPKTPEELQAERKFNTVPYMVGFNKQEFGWIIPMLMGYPLSEGKLDQKTAMSLLWKSYPLVYIAKELIPEATEKYLGGTDDPVKKKDRFLDLLADVMFSVPSVIVARHHRDAGVPTYMYEFQYRPSFSSDMKPKTVIGDHGDELFSVFGAPFLKEGASEEEIRLSKMVMKFWANFARNGNPNGEGLPRWPEYNQEEGYLQIGANTQAAQKLKDKEVAFWTTLFAKKAVEKPPQTEHIEL</sequence>
<protein>
    <recommendedName>
        <fullName evidence="1">Liver carboxylesterase 1</fullName>
        <ecNumber evidence="1">3.1.1.1</ecNumber>
    </recommendedName>
    <alternativeName>
        <fullName evidence="1">Cholesteryl ester hydrolase</fullName>
        <shortName evidence="1">CEH</shortName>
        <ecNumber evidence="1">3.1.1.13</ecNumber>
    </alternativeName>
</protein>
<reference key="1">
    <citation type="submission" date="1998-01" db="EMBL/GenBank/DDBJ databases">
        <title>cDNA cloning and characterization of a monkey liver carboxylesterase.</title>
        <authorList>
            <person name="Sone T."/>
            <person name="Takabatake E."/>
            <person name="Isobe M."/>
        </authorList>
    </citation>
    <scope>NUCLEOTIDE SEQUENCE [MRNA]</scope>
    <source>
        <tissue>Liver</tissue>
    </source>
</reference>
<accession>O46421</accession>
<comment type="function">
    <text evidence="1">Involved in the detoxification of xenobiotics and in the activation of ester and amide prodrugs. Hydrolyzes aromatic and aliphatic esters, but has no catalytic activity toward amides or a fatty acyl-CoA ester. Displays fatty acid ethyl ester synthase activity, catalyzing the ethyl esterification of oleic acid to ethyloleate. Converts monoacylglycerides to free fatty acids and glycerol. Hydrolyzes of 2-arachidonoylglycerol and prostaglandins. Hydrolyzes cellular cholesteryl esters to free cholesterols and promotes reverse cholesterol transport (RCT) by facilitating both the initial and final steps in the process. First of all, allows free cholesterol efflux from macrophages to extracellular cholesterol acceptors and secondly, releases free cholesterol from lipoprotein-delivered cholesteryl esters in the liver for bile acid synthesis or direct secretion into the bile.</text>
</comment>
<comment type="catalytic activity">
    <reaction evidence="3">
        <text>a carboxylic ester + H2O = an alcohol + a carboxylate + H(+)</text>
        <dbReference type="Rhea" id="RHEA:21164"/>
        <dbReference type="ChEBI" id="CHEBI:15377"/>
        <dbReference type="ChEBI" id="CHEBI:15378"/>
        <dbReference type="ChEBI" id="CHEBI:29067"/>
        <dbReference type="ChEBI" id="CHEBI:30879"/>
        <dbReference type="ChEBI" id="CHEBI:33308"/>
        <dbReference type="EC" id="3.1.1.1"/>
    </reaction>
</comment>
<comment type="catalytic activity">
    <reaction evidence="1">
        <text>cholesteryl (9Z-octadecenoate) + H2O = cholesterol + (9Z)-octadecenoate + H(+)</text>
        <dbReference type="Rhea" id="RHEA:33875"/>
        <dbReference type="ChEBI" id="CHEBI:15377"/>
        <dbReference type="ChEBI" id="CHEBI:15378"/>
        <dbReference type="ChEBI" id="CHEBI:16113"/>
        <dbReference type="ChEBI" id="CHEBI:30823"/>
        <dbReference type="ChEBI" id="CHEBI:46898"/>
    </reaction>
    <physiologicalReaction direction="left-to-right" evidence="1">
        <dbReference type="Rhea" id="RHEA:33876"/>
    </physiologicalReaction>
</comment>
<comment type="catalytic activity">
    <reaction evidence="1">
        <text>2-(5Z,8Z,11Z,14Z-eicosatetraenoyl)-glycerol + H2O = glycerol + (5Z,8Z,11Z,14Z)-eicosatetraenoate + H(+)</text>
        <dbReference type="Rhea" id="RHEA:26132"/>
        <dbReference type="ChEBI" id="CHEBI:15377"/>
        <dbReference type="ChEBI" id="CHEBI:15378"/>
        <dbReference type="ChEBI" id="CHEBI:17754"/>
        <dbReference type="ChEBI" id="CHEBI:32395"/>
        <dbReference type="ChEBI" id="CHEBI:52392"/>
    </reaction>
    <physiologicalReaction direction="left-to-right" evidence="1">
        <dbReference type="Rhea" id="RHEA:26133"/>
    </physiologicalReaction>
</comment>
<comment type="catalytic activity">
    <reaction evidence="1">
        <text>prostaglandin E2 1-glyceryl ester + H2O = prostaglandin E2 + glycerol + H(+)</text>
        <dbReference type="Rhea" id="RHEA:48296"/>
        <dbReference type="ChEBI" id="CHEBI:15377"/>
        <dbReference type="ChEBI" id="CHEBI:15378"/>
        <dbReference type="ChEBI" id="CHEBI:17754"/>
        <dbReference type="ChEBI" id="CHEBI:90230"/>
        <dbReference type="ChEBI" id="CHEBI:606564"/>
    </reaction>
    <physiologicalReaction direction="left-to-right" evidence="1">
        <dbReference type="Rhea" id="RHEA:48297"/>
    </physiologicalReaction>
</comment>
<comment type="catalytic activity">
    <reaction evidence="1">
        <text>a cholesterol ester + H2O = cholesterol + a fatty acid + H(+)</text>
        <dbReference type="Rhea" id="RHEA:36403"/>
        <dbReference type="ChEBI" id="CHEBI:15377"/>
        <dbReference type="ChEBI" id="CHEBI:15378"/>
        <dbReference type="ChEBI" id="CHEBI:16113"/>
        <dbReference type="ChEBI" id="CHEBI:17002"/>
        <dbReference type="ChEBI" id="CHEBI:28868"/>
        <dbReference type="EC" id="3.1.1.13"/>
    </reaction>
    <physiologicalReaction direction="left-to-right" evidence="1">
        <dbReference type="Rhea" id="RHEA:36404"/>
    </physiologicalReaction>
</comment>
<comment type="catalytic activity">
    <reaction evidence="1">
        <text>prostaglandin F2alpha 1-glyceryl ester + H2O = prostaglandin F2alpha + glycerol + H(+)</text>
        <dbReference type="Rhea" id="RHEA:48300"/>
        <dbReference type="ChEBI" id="CHEBI:15377"/>
        <dbReference type="ChEBI" id="CHEBI:15378"/>
        <dbReference type="ChEBI" id="CHEBI:17754"/>
        <dbReference type="ChEBI" id="CHEBI:57404"/>
        <dbReference type="ChEBI" id="CHEBI:90233"/>
    </reaction>
    <physiologicalReaction direction="left-to-right" evidence="1">
        <dbReference type="Rhea" id="RHEA:48301"/>
    </physiologicalReaction>
</comment>
<comment type="subunit">
    <text evidence="1">Homotrimer and homohexamer. Binds to beta-glucuronidase (By similarity).</text>
</comment>
<comment type="subcellular location">
    <subcellularLocation>
        <location evidence="1">Endoplasmic reticulum lumen</location>
    </subcellularLocation>
    <subcellularLocation>
        <location evidence="1">Cytoplasm</location>
    </subcellularLocation>
    <subcellularLocation>
        <location evidence="1">Lipid droplet</location>
    </subcellularLocation>
    <text evidence="1">Moves from cytoplasm to lipid droplets upon lipid loading. Associates with lipid droplets independently of triglycerides (TG) content of the droplets and hydrolyzes cholesteryl esters more efficiently from mixed droplets.</text>
</comment>
<comment type="similarity">
    <text evidence="4">Belongs to the type-B carboxylesterase/lipase family.</text>
</comment>
<gene>
    <name evidence="1" type="primary">CES1</name>
</gene>
<organism>
    <name type="scientific">Macaca fascicularis</name>
    <name type="common">Crab-eating macaque</name>
    <name type="synonym">Cynomolgus monkey</name>
    <dbReference type="NCBI Taxonomy" id="9541"/>
    <lineage>
        <taxon>Eukaryota</taxon>
        <taxon>Metazoa</taxon>
        <taxon>Chordata</taxon>
        <taxon>Craniata</taxon>
        <taxon>Vertebrata</taxon>
        <taxon>Euteleostomi</taxon>
        <taxon>Mammalia</taxon>
        <taxon>Eutheria</taxon>
        <taxon>Euarchontoglires</taxon>
        <taxon>Primates</taxon>
        <taxon>Haplorrhini</taxon>
        <taxon>Catarrhini</taxon>
        <taxon>Cercopithecidae</taxon>
        <taxon>Cercopithecinae</taxon>
        <taxon>Macaca</taxon>
    </lineage>
</organism>
<evidence type="ECO:0000250" key="1">
    <source>
        <dbReference type="UniProtKB" id="P23141"/>
    </source>
</evidence>
<evidence type="ECO:0000255" key="2"/>
<evidence type="ECO:0000255" key="3">
    <source>
        <dbReference type="PROSITE-ProRule" id="PRU10039"/>
    </source>
</evidence>
<evidence type="ECO:0000305" key="4"/>
<feature type="signal peptide" evidence="2">
    <location>
        <begin position="1"/>
        <end position="18"/>
    </location>
</feature>
<feature type="chain" id="PRO_0000008570" description="Liver carboxylesterase 1">
    <location>
        <begin position="19"/>
        <end position="566"/>
    </location>
</feature>
<feature type="active site" description="Acyl-ester intermediate" evidence="3">
    <location>
        <position position="221"/>
    </location>
</feature>
<feature type="active site" description="Charge relay system" evidence="1">
    <location>
        <position position="354"/>
    </location>
</feature>
<feature type="active site" description="Charge relay system" evidence="1">
    <location>
        <position position="467"/>
    </location>
</feature>
<feature type="modified residue" description="Phosphoserine" evidence="1">
    <location>
        <position position="379"/>
    </location>
</feature>
<feature type="glycosylation site" description="N-linked (GlcNAc...) asparagine" evidence="2">
    <location>
        <position position="79"/>
    </location>
</feature>
<feature type="disulfide bond" evidence="1">
    <location>
        <begin position="87"/>
        <end position="116"/>
    </location>
</feature>
<feature type="disulfide bond" evidence="1">
    <location>
        <begin position="274"/>
        <end position="285"/>
    </location>
</feature>
<name>EST1_MACFA</name>
<proteinExistence type="evidence at transcript level"/>